<evidence type="ECO:0000250" key="1"/>
<evidence type="ECO:0000250" key="2">
    <source>
        <dbReference type="UniProtKB" id="Q12778"/>
    </source>
</evidence>
<evidence type="ECO:0000250" key="3">
    <source>
        <dbReference type="UniProtKB" id="Q9R1E0"/>
    </source>
</evidence>
<evidence type="ECO:0000255" key="4">
    <source>
        <dbReference type="PROSITE-ProRule" id="PRU00089"/>
    </source>
</evidence>
<evidence type="ECO:0000256" key="5">
    <source>
        <dbReference type="SAM" id="MobiDB-lite"/>
    </source>
</evidence>
<evidence type="ECO:0000269" key="6">
    <source>
    </source>
</evidence>
<accession>A4L7N3</accession>
<protein>
    <recommendedName>
        <fullName>Forkhead box protein O1</fullName>
    </recommendedName>
    <alternativeName>
        <fullName>Forkhead box protein O1A</fullName>
    </alternativeName>
    <alternativeName>
        <fullName>Forkhead in rhabdomyosarcoma</fullName>
    </alternativeName>
</protein>
<feature type="chain" id="PRO_0000419244" description="Forkhead box protein O1">
    <location>
        <begin position="1"/>
        <end position="662"/>
    </location>
</feature>
<feature type="DNA-binding region" description="Fork-head" evidence="4">
    <location>
        <begin position="167"/>
        <end position="261"/>
    </location>
</feature>
<feature type="region of interest" description="Disordered" evidence="5">
    <location>
        <begin position="1"/>
        <end position="62"/>
    </location>
</feature>
<feature type="region of interest" description="Disordered" evidence="5">
    <location>
        <begin position="122"/>
        <end position="165"/>
    </location>
</feature>
<feature type="region of interest" description="DNA-binding" evidence="2">
    <location>
        <begin position="218"/>
        <end position="225"/>
    </location>
</feature>
<feature type="region of interest" description="Disordered" evidence="5">
    <location>
        <begin position="241"/>
        <end position="342"/>
    </location>
</feature>
<feature type="region of interest" description="DNA-binding" evidence="2">
    <location>
        <begin position="241"/>
        <end position="244"/>
    </location>
</feature>
<feature type="region of interest" description="Sufficient for interaction with NLK" evidence="3">
    <location>
        <begin position="290"/>
        <end position="570"/>
    </location>
</feature>
<feature type="region of interest" description="Required for interaction with RUNX2" evidence="3">
    <location>
        <begin position="370"/>
        <end position="466"/>
    </location>
</feature>
<feature type="short sequence motif" description="Nuclear localization signal" evidence="1">
    <location>
        <begin position="258"/>
        <end position="260"/>
    </location>
</feature>
<feature type="short sequence motif" description="Required for interaction with SIRT1" evidence="3">
    <location>
        <begin position="469"/>
        <end position="473"/>
    </location>
</feature>
<feature type="compositionally biased region" description="Low complexity" evidence="5">
    <location>
        <begin position="33"/>
        <end position="62"/>
    </location>
</feature>
<feature type="compositionally biased region" description="Pro residues" evidence="5">
    <location>
        <begin position="126"/>
        <end position="146"/>
    </location>
</feature>
<feature type="compositionally biased region" description="Basic residues" evidence="5">
    <location>
        <begin position="271"/>
        <end position="282"/>
    </location>
</feature>
<feature type="compositionally biased region" description="Polar residues" evidence="5">
    <location>
        <begin position="316"/>
        <end position="333"/>
    </location>
</feature>
<feature type="site" description="DNA-binding" evidence="2">
    <location>
        <position position="165"/>
    </location>
</feature>
<feature type="site" description="DNA-binding" evidence="2">
    <location>
        <position position="172"/>
    </location>
</feature>
<feature type="site" description="DNA-binding" evidence="2">
    <location>
        <position position="232"/>
    </location>
</feature>
<feature type="modified residue" description="Phosphothreonine; by PKB/AKT1 or PKB/AKT2 and SGK1" evidence="2">
    <location>
        <position position="24"/>
    </location>
</feature>
<feature type="modified residue" description="Phosphoserine; by STK4/MST1" evidence="2">
    <location>
        <position position="219"/>
    </location>
</feature>
<feature type="modified residue" description="Phosphoserine" evidence="2">
    <location>
        <position position="225"/>
    </location>
</feature>
<feature type="modified residue" description="Phosphoserine" evidence="2">
    <location>
        <position position="241"/>
    </location>
</feature>
<feature type="modified residue" description="Phosphoserine" evidence="2">
    <location>
        <position position="242"/>
    </location>
</feature>
<feature type="modified residue" description="N6-acetyllysine" evidence="3">
    <location>
        <position position="252"/>
    </location>
</feature>
<feature type="modified residue" description="N6-acetyllysine" evidence="3">
    <location>
        <position position="255"/>
    </location>
</feature>
<feature type="modified residue" description="Phosphoserine; by CDK1" evidence="2">
    <location>
        <position position="256"/>
    </location>
</feature>
<feature type="modified residue" description="Omega-N-methylarginine; by PRMT1" evidence="3">
    <location>
        <position position="258"/>
    </location>
</feature>
<feature type="modified residue" description="Omega-N-methylarginine; by PRMT1" evidence="3">
    <location>
        <position position="260"/>
    </location>
</feature>
<feature type="modified residue" description="Phosphoserine; by PKB/AKT1 and SGK1" evidence="2">
    <location>
        <position position="263"/>
    </location>
</feature>
<feature type="modified residue" description="N6-acetyllysine" evidence="2">
    <location>
        <position position="269"/>
    </location>
</feature>
<feature type="modified residue" description="N6-acetyllysine" evidence="2">
    <location>
        <position position="272"/>
    </location>
</feature>
<feature type="modified residue" description="N6-acetyllysine" evidence="2">
    <location>
        <position position="281"/>
    </location>
</feature>
<feature type="modified residue" description="Phosphoserine" evidence="2">
    <location>
        <position position="294"/>
    </location>
</feature>
<feature type="modified residue" description="Phosphoserine" evidence="3">
    <location>
        <position position="305"/>
    </location>
</feature>
<feature type="modified residue" description="Phosphoserine; by PKB/AKT1" evidence="3">
    <location>
        <position position="326"/>
    </location>
</feature>
<feature type="modified residue" description="Phosphoserine; by CK1 and SGK1" evidence="2">
    <location>
        <position position="329"/>
    </location>
</feature>
<feature type="modified residue" description="Phosphoserine; by CK1" evidence="2">
    <location>
        <position position="332"/>
    </location>
</feature>
<feature type="modified residue" description="Phosphoserine; by DYRK1A" evidence="2">
    <location>
        <position position="336"/>
    </location>
</feature>
<feature type="modified residue" description="Phosphothreonine" evidence="3">
    <location>
        <position position="340"/>
    </location>
</feature>
<feature type="modified residue" description="N6-acetyllysine" evidence="2">
    <location>
        <position position="430"/>
    </location>
</feature>
<name>FOXO1_PIG</name>
<reference key="1">
    <citation type="journal article" date="2009" name="Mol. Biol. Rep.">
        <title>Tissue expression of porcine FoxO1 and its negative regulation during primary preadipocyte differentiation.</title>
        <authorList>
            <person name="Pang W.J."/>
            <person name="Yu T.Y."/>
            <person name="Bai L."/>
            <person name="Yang Y.J."/>
            <person name="Yang G.S."/>
        </authorList>
    </citation>
    <scope>NUCLEOTIDE SEQUENCE [MRNA]</scope>
    <scope>FUNCTION</scope>
    <scope>TISSUE SPECIFICITY</scope>
    <scope>INDUCTION</scope>
</reference>
<organism>
    <name type="scientific">Sus scrofa</name>
    <name type="common">Pig</name>
    <dbReference type="NCBI Taxonomy" id="9823"/>
    <lineage>
        <taxon>Eukaryota</taxon>
        <taxon>Metazoa</taxon>
        <taxon>Chordata</taxon>
        <taxon>Craniata</taxon>
        <taxon>Vertebrata</taxon>
        <taxon>Euteleostomi</taxon>
        <taxon>Mammalia</taxon>
        <taxon>Eutheria</taxon>
        <taxon>Laurasiatheria</taxon>
        <taxon>Artiodactyla</taxon>
        <taxon>Suina</taxon>
        <taxon>Suidae</taxon>
        <taxon>Sus</taxon>
    </lineage>
</organism>
<gene>
    <name type="primary">FOXO1</name>
    <name type="synonym">FOXO1A</name>
</gene>
<sequence>MAEAPQVVEIDPDFEPLPRPRSCTWPLPRPEFSQSNSATSSPAPSGGAAANPDAAAGLPSASAAAVNADFMSNLSLLEESEDFPQAPGSVAAAAAAAAAVAAAAAAAATGGLCGDFQGPEAGCLHPAPPQQPPPPGPLSQHPPVPPAAAGSLAGQPRKSSSSRRNAWGNLSYADLITKAIESSAEKRLTLSQIYEWMVKSVPYFKDKGDSNSSAGWKNSIRHNLSLHSKFIRVQNEGTGKSSWWMLNPEGGKSGKSPRRRAASMDNNSKFAKSRGRAAKKKASLQSGQEGAGDSPGSQFSKWPASPGSHSNDDFDNWSTFRPRTSSNASTISGRLSPIMTEQDDLGNGDVHSMVYPPSAAKMASTLPSLSEISNPENMENLLDNLNLLSSPTSLTVSTQSSPGTIMQQTPCYSFAPPNTSLNSPSPNYQKYTYGQSSMSPLPQMPMQTLQDSKSSYGGMAQYNCAAGLLKELLTSDSPPHNDIMTPVDPGVAQPNSRVLGQNVLMGPSSVMPAYGGQASHNKMMNPSSHSHPGHAQSTSAVNGRALPHAVNTMPHASGMNRLTQEKTALQVPLPHPMQMNALGGYSPASTCNGYGRMGLLHQEKLPSDLDGMFIERLDCDMESIIRNDLMDGDTLDFNFDNVLPNQSFPHSVKTTTHSWVSG</sequence>
<keyword id="KW-0007">Acetylation</keyword>
<keyword id="KW-0010">Activator</keyword>
<keyword id="KW-0053">Apoptosis</keyword>
<keyword id="KW-0072">Autophagy</keyword>
<keyword id="KW-0963">Cytoplasm</keyword>
<keyword id="KW-0221">Differentiation</keyword>
<keyword id="KW-0238">DNA-binding</keyword>
<keyword id="KW-0488">Methylation</keyword>
<keyword id="KW-0539">Nucleus</keyword>
<keyword id="KW-0597">Phosphoprotein</keyword>
<keyword id="KW-1185">Reference proteome</keyword>
<keyword id="KW-0804">Transcription</keyword>
<keyword id="KW-0805">Transcription regulation</keyword>
<keyword id="KW-0832">Ubl conjugation</keyword>
<comment type="function">
    <text evidence="2 3 6">Transcription factor that is the main target of insulin signaling and regulates metabolic homeostasis in response to oxidative stress (PubMed:18293098). Binds to the insulin response element (IRE) with consensus sequence 5'-TT[G/A]TTTTG-3' and the related Daf-16 family binding element (DBE) with consensus sequence 5'-TT[G/A]TTTAC-3' (By similarity). Activity suppressed by insulin (By similarity). Main regulator of redox balance and osteoblast numbers and controls bone mass (By similarity). Orchestrates the endocrine function of the skeleton in regulating glucose metabolism (By similarity). Also acts as a key regulator of chondrogenic commitment of skeletal progenitor cells in response to lipid availability: when lipids levels are low, translocates to the nucleus and promotes expression of SOX9, which induces chondrogenic commitment and suppresses fatty acid oxidation (By similarity). Acts synergistically with ATF4 to suppress osteocalcin/BGLAP activity, increasing glucose levels and triggering glucose intolerance and insulin insensitivity (By similarity). Also suppresses the transcriptional activity of RUNX2, an upstream activator of osteocalcin/BGLAP (By similarity). Acts as an inhibitor of glucose sensing in pancreatic beta cells by acting as a transcription repressor and suppressing expression of PDX1 (By similarity). In hepatocytes, promotes gluconeogenesis by acting together with PPARGC1A and CEBPA to activate the expression of genes such as IGFBP1, G6PC1 and PCK1 (By similarity). Also promotes gluconeogenesis by directly promoting expression of PPARGC1A and G6PC1 (By similarity). Important regulator of cell death acting downstream of CDK1, PKB/AKT1 and STK4/MST1 (By similarity). Promotes neural cell death (By similarity). Mediates insulin action on adipose tissue (By similarity). Regulates the expression of adipogenic genes such as PPARG during preadipocyte differentiation and, adipocyte size and adipose tissue-specific gene expression in response to excessive calorie intake (By similarity). Regulates the transcriptional activity of GADD45A and repair of nitric oxide-damaged DNA in beta-cells (By similarity). Required for the autophagic cell death induction in response to starvation or oxidative stress in a transcription-independent manner (By similarity). Mediates the function of MLIP in cardiomyocytes hypertrophy and cardiac remodeling (By similarity). Positive regulator of apoptosis in cardiac smooth muscle cells as a result of its transcriptional activation of pro-apoptotic genes (By similarity). Regulates endothelial cell (EC) viability and apoptosis in a PPIA/CYPA-dependent manner via transcription of CCL2 and BCL2L11 which are involved in EC chemotaxis and apoptosis (By similarity).</text>
</comment>
<comment type="subunit">
    <text evidence="2 3">Interacts with LRPPRC. Interacts with RUNX2; the interaction inhibits RUNX2 transcriptional activity and mediates the IGF1/insulin-dependent BGLAP expression in osteoblasts Interacts with PPP2R1A; the interaction regulates the dephosphorylation of FOXO1 at Thr-24 and Ser-263 leading to its nuclear import. Interacts with NLK. Interacts with SIRT1; the interaction results in the deacetylation of FOXO1 leading to activation of FOXO1-mediated transcription of genes involved in DNA repair and stress resistance. Binds to CDK1. Interacts with the 14-3-3 proteins, YWHAG and YWHAZ; the interactions require insulin-stimulated phosphorylation on Thr-24, promote nuclear exit and loss of transcriptional activity. Interacts with SKP2; the interaction ubiquitinates FOXO1 leading to its proteasomal degradation. The interaction requires the presence of KRIT1. Interacts (via the C-terminal half) with ATF4 (via its DNA binding domain); the interaction occurs in osteoblasts, regulates glucose homeostasis via suppression of beta-cell proliferation and subsequent decrease in insulin production. Interacts with PRMT1; the interaction methylates FOXO1, prevents PKB/AKT1 phosphorylation and retains FOXO1 in the nucleus. Interacts with EP300 and CREBBP; the interactions acetylate FOXO1. Interacts with SIRT2; the interaction is disrupted in response to oxidative stress or serum deprivation, leading to increased level of acetylated FOXO1, which promotes stress-induced autophagy by stimulating E1-like activating enzyme ATG7. Interacts (acetylated form) with ATG7; the interaction is increased in response to oxidative stress or serum deprivation and promotes the autophagic process leading to cell death. Interacts (acetylated form) with PPARG. Interacts with XBP1; this interaction is direct and leads to FOXO1 ubiquitination and degradation via the proteasome pathway (By similarity). Interacts (via the Fork-head domain) with CEBPA; the interaction increases when FOXO1 is deacetylated. Interacts with WDFY2. Forms a complex with WDFY2 and AKT1 (By similarity). Interacts with CRY1 (By similarity). Interacts with PPIA/CYPA; the interaction promotes FOXO1 dephosphorylation, nuclear accumulation and transcriptional activity (By similarity). Interacts with TOX4; FOXO1 is required for full induction of TOX4-dependent activity and the interaction is inhibited by insulin (By similarity). Interacts (when phosphorylated on Ser-263) with STUB1/CHIP (By similarity).</text>
</comment>
<comment type="subcellular location">
    <subcellularLocation>
        <location evidence="3">Cytoplasm</location>
    </subcellularLocation>
    <subcellularLocation>
        <location evidence="3">Nucleus</location>
    </subcellularLocation>
    <text evidence="2 3">Shuttles between the cytoplasm and nucleus (By similarity). Largely nuclear in unstimulated cells (By similarity). In osteoblasts, colocalizes with ATF4 and RUNX2 in the nucleus. Serum deprivation increases localization to the nucleus, leading to activate expression of SOX9 and subsequent chondrogenesis (By similarity). Insulin-induced phosphorylation at Ser-253 by PKB/AKT1 leads, via stimulation of Thr-24 phosphorylation, to binding of 14-3-3 proteins and nuclear export to the cytoplasm where it is degraded by the ubiquitin-proteasomal pathway (By similarity). Phosphorylation at Ser-249 by CDK1 disrupts binding of 14-3-3 proteins and promotes nuclear accumulation (By similarity). Phosphorylation by NLK results in nuclear export (By similarity). Translocates to the nucleus upon oxidative stress-induced phosphorylation at Ser-212 by STK4/MST1 (By similarity). SGK1-mediated phosphorylation also results in nuclear translocation. Retained in the nucleus under stress stimuli including oxidative stress, nutrient deprivation or nitric oxide. Methylated form is nuclear (By similarity). PPIA/CYPA stimulates its nuclear accumulation (By similarity). Deacetylation by SIRT6, promotes its translocation into the cytoplasm (By similarity).</text>
</comment>
<comment type="tissue specificity">
    <text evidence="6">Highly in subcutaneous adipose and visceral adipose tissues. Levels higher in piglets than in adults. Also expressed at lower levels in liver and muscle.</text>
</comment>
<comment type="induction">
    <text evidence="6">Up-regulated during preadipocyte differentiation. Down-regulated in these cells on treatment with IGF1.</text>
</comment>
<comment type="PTM">
    <text evidence="2 3">Phosphorylation by NLK promotes nuclear export and inhibits the transcriptional activity. In response to growth factors, phosphorylation on Thr-24, Ser-263 and Ser-326 by PKB/AKT1 promotes nuclear export and inactivation of transactivational activity. Phosphorylation on Thr-24 is required for binding 14-3-3 proteins. Phosphorylation of Ser-263 decreases DNA-binding activity and promotes the phosphorylation of Thr-24 and Ser-326, permitting phosphorylation of Ser-329 and Ser-332, probably by CDK1, leading to nuclear exclusion and loss of function. Stress signals, such as response to oxygen or nitric oxide, attenuate the PKB/AKT1-mediated phosphorylation leading to nuclear retention. Phosphorylation of Ser-336 is independent of IGF1 and leads to reduced function. Dephosphorylated on Thr-24 and Ser-263 by PP2A in beta-cells under oxidative stress leading to nuclear retention. Phosphorylation of Ser-256 by CDK1 disrupts binding of 14-3-3 proteins leading to nuclear accumulation and has no effect on DNA binding nor transcriptional activity. Phosphorylation by STK4/MST1 on Ser-219, upon oxidative stress, inhibits binding to 14-3-3 proteins and nuclear export (By similarity). PPIA/CYPA promotes its dephosphorylation on Ser-263 (By similarity).</text>
</comment>
<comment type="PTM">
    <text evidence="2 3">Ubiquitinated by SKP2 (By similarity). Ubiquitination leads to proteasomal degradation (By similarity). Ubiquitinated by STUB1/CHIP; when Ser-263 is phosphorylated (By similarity).</text>
</comment>
<comment type="PTM">
    <text evidence="3">Methylation inhibits AKT1-mediated phosphorylation at Ser-263 and is increased by oxidative stress.</text>
</comment>
<comment type="PTM">
    <text evidence="2">Acetylated. Acetylation at Lys-269 and Lys-281 are necessary for autophagic cell death induction. Deacetylated by SIRT2 in response to oxidative stress or serum deprivation, thereby negatively regulating FOXO1-mediated autophagic cell death. Once in the nucleus, acetylated by CREBBP/EP300. Acetylation diminishes the interaction with target DNA and attenuates the transcriptional activity. It increases the phosphorylation at Ser-263. Deacetylation by SIRT1 results in reactivation of the transcriptional activity. Oxidative stress by hydrogen peroxide treatment appears to promote deacetylation and uncoupling of insulin-induced phosphorylation. By contrast, resveratrol acts independently of acetylation. Acetylated at Lys-430, promoting its localization to the nucleus and transcription factor activity. Deacetylation at Lys-430 by SIRT6, promotes its translocation into the cytoplasm, preventing its transcription factor activity. Deacetylation and subsequent inhibition by SIRT6 has different effects depending on cell types: it inhibits gluconeogenesis in hepatocytes, promotes glucose sensing in pancreatic beta-cells and regulates lipid catabolism in brown adipocytes.</text>
</comment>
<dbReference type="EMBL" id="EF453379">
    <property type="protein sequence ID" value="ABO47824.1"/>
    <property type="molecule type" value="mRNA"/>
</dbReference>
<dbReference type="RefSeq" id="NP_999179.2">
    <property type="nucleotide sequence ID" value="NM_214014.2"/>
</dbReference>
<dbReference type="SMR" id="A4L7N3"/>
<dbReference type="FunCoup" id="A4L7N3">
    <property type="interactions" value="446"/>
</dbReference>
<dbReference type="STRING" id="9823.ENSSSCP00000029792"/>
<dbReference type="PaxDb" id="9823-ENSSSCP00000010000"/>
<dbReference type="GeneID" id="397077"/>
<dbReference type="CTD" id="2308"/>
<dbReference type="eggNOG" id="KOG2294">
    <property type="taxonomic scope" value="Eukaryota"/>
</dbReference>
<dbReference type="InParanoid" id="A4L7N3"/>
<dbReference type="OrthoDB" id="5954824at2759"/>
<dbReference type="Proteomes" id="UP000008227">
    <property type="component" value="Unplaced"/>
</dbReference>
<dbReference type="Proteomes" id="UP000314985">
    <property type="component" value="Unplaced"/>
</dbReference>
<dbReference type="Proteomes" id="UP000694570">
    <property type="component" value="Unplaced"/>
</dbReference>
<dbReference type="Proteomes" id="UP000694571">
    <property type="component" value="Unplaced"/>
</dbReference>
<dbReference type="Proteomes" id="UP000694720">
    <property type="component" value="Unplaced"/>
</dbReference>
<dbReference type="Proteomes" id="UP000694722">
    <property type="component" value="Unplaced"/>
</dbReference>
<dbReference type="Proteomes" id="UP000694723">
    <property type="component" value="Unplaced"/>
</dbReference>
<dbReference type="Proteomes" id="UP000694724">
    <property type="component" value="Unplaced"/>
</dbReference>
<dbReference type="Proteomes" id="UP000694725">
    <property type="component" value="Unplaced"/>
</dbReference>
<dbReference type="Proteomes" id="UP000694726">
    <property type="component" value="Unplaced"/>
</dbReference>
<dbReference type="Proteomes" id="UP000694727">
    <property type="component" value="Unplaced"/>
</dbReference>
<dbReference type="Proteomes" id="UP000694728">
    <property type="component" value="Unplaced"/>
</dbReference>
<dbReference type="GO" id="GO:0005737">
    <property type="term" value="C:cytoplasm"/>
    <property type="evidence" value="ECO:0000314"/>
    <property type="project" value="AgBase"/>
</dbReference>
<dbReference type="GO" id="GO:0005634">
    <property type="term" value="C:nucleus"/>
    <property type="evidence" value="ECO:0000314"/>
    <property type="project" value="AgBase"/>
</dbReference>
<dbReference type="GO" id="GO:0001228">
    <property type="term" value="F:DNA-binding transcription activator activity, RNA polymerase II-specific"/>
    <property type="evidence" value="ECO:0000250"/>
    <property type="project" value="UniProtKB"/>
</dbReference>
<dbReference type="GO" id="GO:0003700">
    <property type="term" value="F:DNA-binding transcription factor activity"/>
    <property type="evidence" value="ECO:0000250"/>
    <property type="project" value="UniProtKB"/>
</dbReference>
<dbReference type="GO" id="GO:0000981">
    <property type="term" value="F:DNA-binding transcription factor activity, RNA polymerase II-specific"/>
    <property type="evidence" value="ECO:0000318"/>
    <property type="project" value="GO_Central"/>
</dbReference>
<dbReference type="GO" id="GO:0051721">
    <property type="term" value="F:protein phosphatase 2A binding"/>
    <property type="evidence" value="ECO:0000250"/>
    <property type="project" value="UniProtKB"/>
</dbReference>
<dbReference type="GO" id="GO:0000978">
    <property type="term" value="F:RNA polymerase II cis-regulatory region sequence-specific DNA binding"/>
    <property type="evidence" value="ECO:0000250"/>
    <property type="project" value="UniProtKB"/>
</dbReference>
<dbReference type="GO" id="GO:0043565">
    <property type="term" value="F:sequence-specific DNA binding"/>
    <property type="evidence" value="ECO:0000250"/>
    <property type="project" value="UniProtKB"/>
</dbReference>
<dbReference type="GO" id="GO:0006915">
    <property type="term" value="P:apoptotic process"/>
    <property type="evidence" value="ECO:0000250"/>
    <property type="project" value="UniProtKB"/>
</dbReference>
<dbReference type="GO" id="GO:0006914">
    <property type="term" value="P:autophagy"/>
    <property type="evidence" value="ECO:0007669"/>
    <property type="project" value="UniProtKB-KW"/>
</dbReference>
<dbReference type="GO" id="GO:0030154">
    <property type="term" value="P:cell differentiation"/>
    <property type="evidence" value="ECO:0007669"/>
    <property type="project" value="UniProtKB-KW"/>
</dbReference>
<dbReference type="GO" id="GO:0071455">
    <property type="term" value="P:cellular response to hyperoxia"/>
    <property type="evidence" value="ECO:0000250"/>
    <property type="project" value="UniProtKB"/>
</dbReference>
<dbReference type="GO" id="GO:0032869">
    <property type="term" value="P:cellular response to insulin stimulus"/>
    <property type="evidence" value="ECO:0000250"/>
    <property type="project" value="UniProtKB"/>
</dbReference>
<dbReference type="GO" id="GO:0071732">
    <property type="term" value="P:cellular response to nitric oxide"/>
    <property type="evidence" value="ECO:0000250"/>
    <property type="project" value="UniProtKB"/>
</dbReference>
<dbReference type="GO" id="GO:0034599">
    <property type="term" value="P:cellular response to oxidative stress"/>
    <property type="evidence" value="ECO:0000250"/>
    <property type="project" value="UniProtKB"/>
</dbReference>
<dbReference type="GO" id="GO:0009267">
    <property type="term" value="P:cellular response to starvation"/>
    <property type="evidence" value="ECO:0000250"/>
    <property type="project" value="UniProtKB"/>
</dbReference>
<dbReference type="GO" id="GO:0006974">
    <property type="term" value="P:DNA damage response"/>
    <property type="evidence" value="ECO:0000250"/>
    <property type="project" value="UniProtKB"/>
</dbReference>
<dbReference type="GO" id="GO:0008286">
    <property type="term" value="P:insulin receptor signaling pathway"/>
    <property type="evidence" value="ECO:0000314"/>
    <property type="project" value="UniProtKB"/>
</dbReference>
<dbReference type="GO" id="GO:0045599">
    <property type="term" value="P:negative regulation of fat cell differentiation"/>
    <property type="evidence" value="ECO:0000314"/>
    <property type="project" value="UniProtKB"/>
</dbReference>
<dbReference type="GO" id="GO:0010629">
    <property type="term" value="P:negative regulation of gene expression"/>
    <property type="evidence" value="ECO:0000315"/>
    <property type="project" value="AgBase"/>
</dbReference>
<dbReference type="GO" id="GO:0046676">
    <property type="term" value="P:negative regulation of insulin secretion"/>
    <property type="evidence" value="ECO:0000250"/>
    <property type="project" value="UniProtKB"/>
</dbReference>
<dbReference type="GO" id="GO:0018105">
    <property type="term" value="P:peptidyl-serine phosphorylation"/>
    <property type="evidence" value="ECO:0000314"/>
    <property type="project" value="AgBase"/>
</dbReference>
<dbReference type="GO" id="GO:0018107">
    <property type="term" value="P:peptidyl-threonine phosphorylation"/>
    <property type="evidence" value="ECO:0000314"/>
    <property type="project" value="AgBase"/>
</dbReference>
<dbReference type="GO" id="GO:0043065">
    <property type="term" value="P:positive regulation of apoptotic process"/>
    <property type="evidence" value="ECO:0000250"/>
    <property type="project" value="UniProtKB"/>
</dbReference>
<dbReference type="GO" id="GO:0010508">
    <property type="term" value="P:positive regulation of autophagy"/>
    <property type="evidence" value="ECO:0000250"/>
    <property type="project" value="UniProtKB"/>
</dbReference>
<dbReference type="GO" id="GO:1903661">
    <property type="term" value="P:positive regulation of complement-dependent cytotoxicity"/>
    <property type="evidence" value="ECO:0000315"/>
    <property type="project" value="AgBase"/>
</dbReference>
<dbReference type="GO" id="GO:0045722">
    <property type="term" value="P:positive regulation of gluconeogenesis"/>
    <property type="evidence" value="ECO:0000250"/>
    <property type="project" value="UniProtKB"/>
</dbReference>
<dbReference type="GO" id="GO:0045732">
    <property type="term" value="P:positive regulation of protein catabolic process"/>
    <property type="evidence" value="ECO:0000250"/>
    <property type="project" value="UniProtKB"/>
</dbReference>
<dbReference type="GO" id="GO:0034393">
    <property type="term" value="P:positive regulation of smooth muscle cell apoptotic process"/>
    <property type="evidence" value="ECO:0000250"/>
    <property type="project" value="UniProtKB"/>
</dbReference>
<dbReference type="GO" id="GO:0006357">
    <property type="term" value="P:regulation of transcription by RNA polymerase II"/>
    <property type="evidence" value="ECO:0000318"/>
    <property type="project" value="GO_Central"/>
</dbReference>
<dbReference type="GO" id="GO:0060260">
    <property type="term" value="P:regulation of transcription initiation by RNA polymerase II"/>
    <property type="evidence" value="ECO:0000250"/>
    <property type="project" value="UniProtKB"/>
</dbReference>
<dbReference type="GO" id="GO:0070542">
    <property type="term" value="P:response to fatty acid"/>
    <property type="evidence" value="ECO:0000250"/>
    <property type="project" value="UniProtKB"/>
</dbReference>
<dbReference type="CDD" id="cd20060">
    <property type="entry name" value="FH_FOXO1"/>
    <property type="match status" value="1"/>
</dbReference>
<dbReference type="FunFam" id="1.10.10.10:FF:000032">
    <property type="entry name" value="Forkhead box protein O4"/>
    <property type="match status" value="1"/>
</dbReference>
<dbReference type="Gene3D" id="1.10.10.10">
    <property type="entry name" value="Winged helix-like DNA-binding domain superfamily/Winged helix DNA-binding domain"/>
    <property type="match status" value="1"/>
</dbReference>
<dbReference type="InterPro" id="IPR047408">
    <property type="entry name" value="FH_FOXO1"/>
</dbReference>
<dbReference type="InterPro" id="IPR001766">
    <property type="entry name" value="Fork_head_dom"/>
</dbReference>
<dbReference type="InterPro" id="IPR032067">
    <property type="entry name" value="FOXO-TAD"/>
</dbReference>
<dbReference type="InterPro" id="IPR032068">
    <property type="entry name" value="FOXO_KIX-bd"/>
</dbReference>
<dbReference type="InterPro" id="IPR030456">
    <property type="entry name" value="TF_fork_head_CS_2"/>
</dbReference>
<dbReference type="InterPro" id="IPR036388">
    <property type="entry name" value="WH-like_DNA-bd_sf"/>
</dbReference>
<dbReference type="InterPro" id="IPR036390">
    <property type="entry name" value="WH_DNA-bd_sf"/>
</dbReference>
<dbReference type="PANTHER" id="PTHR45767">
    <property type="entry name" value="FORKHEAD BOX PROTEIN O"/>
    <property type="match status" value="1"/>
</dbReference>
<dbReference type="PANTHER" id="PTHR45767:SF1">
    <property type="entry name" value="FORKHEAD BOX PROTEIN O1"/>
    <property type="match status" value="1"/>
</dbReference>
<dbReference type="Pfam" id="PF00250">
    <property type="entry name" value="Forkhead"/>
    <property type="match status" value="1"/>
</dbReference>
<dbReference type="Pfam" id="PF16676">
    <property type="entry name" value="FOXO-TAD"/>
    <property type="match status" value="1"/>
</dbReference>
<dbReference type="Pfam" id="PF16675">
    <property type="entry name" value="FOXO_KIX_bdg"/>
    <property type="match status" value="1"/>
</dbReference>
<dbReference type="PRINTS" id="PR00053">
    <property type="entry name" value="FORKHEAD"/>
</dbReference>
<dbReference type="SMART" id="SM00339">
    <property type="entry name" value="FH"/>
    <property type="match status" value="1"/>
</dbReference>
<dbReference type="SUPFAM" id="SSF46785">
    <property type="entry name" value="Winged helix' DNA-binding domain"/>
    <property type="match status" value="1"/>
</dbReference>
<dbReference type="PROSITE" id="PS00658">
    <property type="entry name" value="FORK_HEAD_2"/>
    <property type="match status" value="1"/>
</dbReference>
<dbReference type="PROSITE" id="PS50039">
    <property type="entry name" value="FORK_HEAD_3"/>
    <property type="match status" value="1"/>
</dbReference>
<proteinExistence type="evidence at transcript level"/>